<accession>O31931</accession>
<sequence>MYWIEWIENGEKKNIVAEGWIEWAAILEDLYQKRFEYVEWKRL</sequence>
<gene>
    <name type="primary">yopG</name>
    <name type="ordered locus">BSU20900</name>
</gene>
<proteinExistence type="predicted"/>
<keyword id="KW-1185">Reference proteome</keyword>
<protein>
    <recommendedName>
        <fullName>SPbeta prophage-derived uncharacterized protein YopG</fullName>
    </recommendedName>
</protein>
<dbReference type="EMBL" id="AL009126">
    <property type="protein sequence ID" value="CAB14008.1"/>
    <property type="molecule type" value="Genomic_DNA"/>
</dbReference>
<dbReference type="RefSeq" id="NP_389972.1">
    <property type="nucleotide sequence ID" value="NC_000964.3"/>
</dbReference>
<dbReference type="RefSeq" id="WP_004399255.1">
    <property type="nucleotide sequence ID" value="NZ_OZ025638.1"/>
</dbReference>
<dbReference type="FunCoup" id="O31931">
    <property type="interactions" value="78"/>
</dbReference>
<dbReference type="STRING" id="224308.BSU20900"/>
<dbReference type="PaxDb" id="224308-BSU20900"/>
<dbReference type="EnsemblBacteria" id="CAB14008">
    <property type="protein sequence ID" value="CAB14008"/>
    <property type="gene ID" value="BSU_20900"/>
</dbReference>
<dbReference type="GeneID" id="939181"/>
<dbReference type="KEGG" id="bsu:BSU20900"/>
<dbReference type="PATRIC" id="fig|224308.179.peg.2280"/>
<dbReference type="InParanoid" id="O31931"/>
<dbReference type="OrthoDB" id="2889187at2"/>
<dbReference type="BioCyc" id="BSUB:BSU20900-MONOMER"/>
<dbReference type="Proteomes" id="UP000001570">
    <property type="component" value="Chromosome"/>
</dbReference>
<feature type="chain" id="PRO_0000360464" description="SPbeta prophage-derived uncharacterized protein YopG">
    <location>
        <begin position="1"/>
        <end position="43"/>
    </location>
</feature>
<name>YOPG_BACSU</name>
<organism>
    <name type="scientific">Bacillus subtilis (strain 168)</name>
    <dbReference type="NCBI Taxonomy" id="224308"/>
    <lineage>
        <taxon>Bacteria</taxon>
        <taxon>Bacillati</taxon>
        <taxon>Bacillota</taxon>
        <taxon>Bacilli</taxon>
        <taxon>Bacillales</taxon>
        <taxon>Bacillaceae</taxon>
        <taxon>Bacillus</taxon>
    </lineage>
</organism>
<reference key="1">
    <citation type="journal article" date="1997" name="Nature">
        <title>The complete genome sequence of the Gram-positive bacterium Bacillus subtilis.</title>
        <authorList>
            <person name="Kunst F."/>
            <person name="Ogasawara N."/>
            <person name="Moszer I."/>
            <person name="Albertini A.M."/>
            <person name="Alloni G."/>
            <person name="Azevedo V."/>
            <person name="Bertero M.G."/>
            <person name="Bessieres P."/>
            <person name="Bolotin A."/>
            <person name="Borchert S."/>
            <person name="Borriss R."/>
            <person name="Boursier L."/>
            <person name="Brans A."/>
            <person name="Braun M."/>
            <person name="Brignell S.C."/>
            <person name="Bron S."/>
            <person name="Brouillet S."/>
            <person name="Bruschi C.V."/>
            <person name="Caldwell B."/>
            <person name="Capuano V."/>
            <person name="Carter N.M."/>
            <person name="Choi S.-K."/>
            <person name="Codani J.-J."/>
            <person name="Connerton I.F."/>
            <person name="Cummings N.J."/>
            <person name="Daniel R.A."/>
            <person name="Denizot F."/>
            <person name="Devine K.M."/>
            <person name="Duesterhoeft A."/>
            <person name="Ehrlich S.D."/>
            <person name="Emmerson P.T."/>
            <person name="Entian K.-D."/>
            <person name="Errington J."/>
            <person name="Fabret C."/>
            <person name="Ferrari E."/>
            <person name="Foulger D."/>
            <person name="Fritz C."/>
            <person name="Fujita M."/>
            <person name="Fujita Y."/>
            <person name="Fuma S."/>
            <person name="Galizzi A."/>
            <person name="Galleron N."/>
            <person name="Ghim S.-Y."/>
            <person name="Glaser P."/>
            <person name="Goffeau A."/>
            <person name="Golightly E.J."/>
            <person name="Grandi G."/>
            <person name="Guiseppi G."/>
            <person name="Guy B.J."/>
            <person name="Haga K."/>
            <person name="Haiech J."/>
            <person name="Harwood C.R."/>
            <person name="Henaut A."/>
            <person name="Hilbert H."/>
            <person name="Holsappel S."/>
            <person name="Hosono S."/>
            <person name="Hullo M.-F."/>
            <person name="Itaya M."/>
            <person name="Jones L.-M."/>
            <person name="Joris B."/>
            <person name="Karamata D."/>
            <person name="Kasahara Y."/>
            <person name="Klaerr-Blanchard M."/>
            <person name="Klein C."/>
            <person name="Kobayashi Y."/>
            <person name="Koetter P."/>
            <person name="Koningstein G."/>
            <person name="Krogh S."/>
            <person name="Kumano M."/>
            <person name="Kurita K."/>
            <person name="Lapidus A."/>
            <person name="Lardinois S."/>
            <person name="Lauber J."/>
            <person name="Lazarevic V."/>
            <person name="Lee S.-M."/>
            <person name="Levine A."/>
            <person name="Liu H."/>
            <person name="Masuda S."/>
            <person name="Mauel C."/>
            <person name="Medigue C."/>
            <person name="Medina N."/>
            <person name="Mellado R.P."/>
            <person name="Mizuno M."/>
            <person name="Moestl D."/>
            <person name="Nakai S."/>
            <person name="Noback M."/>
            <person name="Noone D."/>
            <person name="O'Reilly M."/>
            <person name="Ogawa K."/>
            <person name="Ogiwara A."/>
            <person name="Oudega B."/>
            <person name="Park S.-H."/>
            <person name="Parro V."/>
            <person name="Pohl T.M."/>
            <person name="Portetelle D."/>
            <person name="Porwollik S."/>
            <person name="Prescott A.M."/>
            <person name="Presecan E."/>
            <person name="Pujic P."/>
            <person name="Purnelle B."/>
            <person name="Rapoport G."/>
            <person name="Rey M."/>
            <person name="Reynolds S."/>
            <person name="Rieger M."/>
            <person name="Rivolta C."/>
            <person name="Rocha E."/>
            <person name="Roche B."/>
            <person name="Rose M."/>
            <person name="Sadaie Y."/>
            <person name="Sato T."/>
            <person name="Scanlan E."/>
            <person name="Schleich S."/>
            <person name="Schroeter R."/>
            <person name="Scoffone F."/>
            <person name="Sekiguchi J."/>
            <person name="Sekowska A."/>
            <person name="Seror S.J."/>
            <person name="Serror P."/>
            <person name="Shin B.-S."/>
            <person name="Soldo B."/>
            <person name="Sorokin A."/>
            <person name="Tacconi E."/>
            <person name="Takagi T."/>
            <person name="Takahashi H."/>
            <person name="Takemaru K."/>
            <person name="Takeuchi M."/>
            <person name="Tamakoshi A."/>
            <person name="Tanaka T."/>
            <person name="Terpstra P."/>
            <person name="Tognoni A."/>
            <person name="Tosato V."/>
            <person name="Uchiyama S."/>
            <person name="Vandenbol M."/>
            <person name="Vannier F."/>
            <person name="Vassarotti A."/>
            <person name="Viari A."/>
            <person name="Wambutt R."/>
            <person name="Wedler E."/>
            <person name="Wedler H."/>
            <person name="Weitzenegger T."/>
            <person name="Winters P."/>
            <person name="Wipat A."/>
            <person name="Yamamoto H."/>
            <person name="Yamane K."/>
            <person name="Yasumoto K."/>
            <person name="Yata K."/>
            <person name="Yoshida K."/>
            <person name="Yoshikawa H.-F."/>
            <person name="Zumstein E."/>
            <person name="Yoshikawa H."/>
            <person name="Danchin A."/>
        </authorList>
    </citation>
    <scope>NUCLEOTIDE SEQUENCE [LARGE SCALE GENOMIC DNA]</scope>
    <source>
        <strain>168</strain>
    </source>
</reference>